<name>OTC_PSYWF</name>
<evidence type="ECO:0000250" key="1"/>
<evidence type="ECO:0000255" key="2">
    <source>
        <dbReference type="HAMAP-Rule" id="MF_01109"/>
    </source>
</evidence>
<organism>
    <name type="scientific">Psychrobacter sp. (strain PRwf-1)</name>
    <dbReference type="NCBI Taxonomy" id="349106"/>
    <lineage>
        <taxon>Bacteria</taxon>
        <taxon>Pseudomonadati</taxon>
        <taxon>Pseudomonadota</taxon>
        <taxon>Gammaproteobacteria</taxon>
        <taxon>Moraxellales</taxon>
        <taxon>Moraxellaceae</taxon>
        <taxon>Psychrobacter</taxon>
    </lineage>
</organism>
<proteinExistence type="inferred from homology"/>
<feature type="chain" id="PRO_1000084858" description="Ornithine carbamoyltransferase">
    <location>
        <begin position="1"/>
        <end position="306"/>
    </location>
</feature>
<feature type="binding site" evidence="2">
    <location>
        <begin position="53"/>
        <end position="56"/>
    </location>
    <ligand>
        <name>carbamoyl phosphate</name>
        <dbReference type="ChEBI" id="CHEBI:58228"/>
    </ligand>
</feature>
<feature type="binding site" evidence="2">
    <location>
        <position position="80"/>
    </location>
    <ligand>
        <name>carbamoyl phosphate</name>
        <dbReference type="ChEBI" id="CHEBI:58228"/>
    </ligand>
</feature>
<feature type="binding site" evidence="2">
    <location>
        <position position="104"/>
    </location>
    <ligand>
        <name>carbamoyl phosphate</name>
        <dbReference type="ChEBI" id="CHEBI:58228"/>
    </ligand>
</feature>
<feature type="binding site" evidence="2">
    <location>
        <begin position="131"/>
        <end position="134"/>
    </location>
    <ligand>
        <name>carbamoyl phosphate</name>
        <dbReference type="ChEBI" id="CHEBI:58228"/>
    </ligand>
</feature>
<feature type="binding site" evidence="2">
    <location>
        <position position="162"/>
    </location>
    <ligand>
        <name>L-ornithine</name>
        <dbReference type="ChEBI" id="CHEBI:46911"/>
    </ligand>
</feature>
<feature type="binding site" evidence="2">
    <location>
        <position position="219"/>
    </location>
    <ligand>
        <name>L-ornithine</name>
        <dbReference type="ChEBI" id="CHEBI:46911"/>
    </ligand>
</feature>
<feature type="binding site" evidence="2">
    <location>
        <begin position="223"/>
        <end position="224"/>
    </location>
    <ligand>
        <name>L-ornithine</name>
        <dbReference type="ChEBI" id="CHEBI:46911"/>
    </ligand>
</feature>
<feature type="binding site" evidence="2">
    <location>
        <begin position="259"/>
        <end position="260"/>
    </location>
    <ligand>
        <name>carbamoyl phosphate</name>
        <dbReference type="ChEBI" id="CHEBI:58228"/>
    </ligand>
</feature>
<feature type="binding site" evidence="2">
    <location>
        <position position="287"/>
    </location>
    <ligand>
        <name>carbamoyl phosphate</name>
        <dbReference type="ChEBI" id="CHEBI:58228"/>
    </ligand>
</feature>
<accession>A5WDJ2</accession>
<gene>
    <name evidence="2" type="primary">argF</name>
    <name type="ordered locus">PsycPRwf_0781</name>
</gene>
<protein>
    <recommendedName>
        <fullName evidence="2">Ornithine carbamoyltransferase</fullName>
        <shortName evidence="2">OTCase</shortName>
        <ecNumber evidence="2">2.1.3.3</ecNumber>
    </recommendedName>
</protein>
<reference key="1">
    <citation type="submission" date="2007-05" db="EMBL/GenBank/DDBJ databases">
        <title>Complete sequence of chromosome of Psychrobacter sp. PRwf-1.</title>
        <authorList>
            <consortium name="US DOE Joint Genome Institute"/>
            <person name="Copeland A."/>
            <person name="Lucas S."/>
            <person name="Lapidus A."/>
            <person name="Barry K."/>
            <person name="Detter J.C."/>
            <person name="Glavina del Rio T."/>
            <person name="Hammon N."/>
            <person name="Israni S."/>
            <person name="Dalin E."/>
            <person name="Tice H."/>
            <person name="Pitluck S."/>
            <person name="Chain P."/>
            <person name="Malfatti S."/>
            <person name="Shin M."/>
            <person name="Vergez L."/>
            <person name="Schmutz J."/>
            <person name="Larimer F."/>
            <person name="Land M."/>
            <person name="Hauser L."/>
            <person name="Kyrpides N."/>
            <person name="Kim E."/>
            <person name="Tiedje J."/>
            <person name="Richardson P."/>
        </authorList>
    </citation>
    <scope>NUCLEOTIDE SEQUENCE [LARGE SCALE GENOMIC DNA]</scope>
    <source>
        <strain>PRwf-1</strain>
    </source>
</reference>
<comment type="function">
    <text evidence="1">Reversibly catalyzes the transfer of the carbamoyl group from carbamoyl phosphate (CP) to the N(epsilon) atom of ornithine (ORN) to produce L-citrulline.</text>
</comment>
<comment type="catalytic activity">
    <reaction evidence="2">
        <text>carbamoyl phosphate + L-ornithine = L-citrulline + phosphate + H(+)</text>
        <dbReference type="Rhea" id="RHEA:19513"/>
        <dbReference type="ChEBI" id="CHEBI:15378"/>
        <dbReference type="ChEBI" id="CHEBI:43474"/>
        <dbReference type="ChEBI" id="CHEBI:46911"/>
        <dbReference type="ChEBI" id="CHEBI:57743"/>
        <dbReference type="ChEBI" id="CHEBI:58228"/>
        <dbReference type="EC" id="2.1.3.3"/>
    </reaction>
</comment>
<comment type="pathway">
    <text evidence="2">Amino-acid biosynthesis; L-arginine biosynthesis; L-arginine from L-ornithine and carbamoyl phosphate: step 1/3.</text>
</comment>
<comment type="subcellular location">
    <subcellularLocation>
        <location evidence="2">Cytoplasm</location>
    </subcellularLocation>
</comment>
<comment type="similarity">
    <text evidence="2">Belongs to the aspartate/ornithine carbamoyltransferase superfamily. OTCase family.</text>
</comment>
<sequence length="306" mass="34697">MSVRHFLTLLDLSPAELEALIKRASELRKMQHAGEVYQPFVGRTLGMIFEKSSTRTRISFETGMGQFGGHAIFLSPKDTQLGRGEPIEDSARVISSMVDIIMIRTFEHEKVEKFAQYSSVPIINALTDDFHPCQLLADMQTFYEHRGSIKDKIVTWVGDGNNMCSSFMAAANQFGFELRVAAPYGFEPNPELMEKFKHCVSLVDDVQDAAKDAHLIVTDVWASMGQESEQNTRARRFAPYQVTPSMLDKADPEVLFMHCLPAHRGEEISHDMLDDPRSVVWDEAENRLHAQKALMEFLLKDKIKLN</sequence>
<keyword id="KW-0028">Amino-acid biosynthesis</keyword>
<keyword id="KW-0055">Arginine biosynthesis</keyword>
<keyword id="KW-0963">Cytoplasm</keyword>
<keyword id="KW-0808">Transferase</keyword>
<dbReference type="EC" id="2.1.3.3" evidence="2"/>
<dbReference type="EMBL" id="CP000713">
    <property type="protein sequence ID" value="ABQ93733.1"/>
    <property type="molecule type" value="Genomic_DNA"/>
</dbReference>
<dbReference type="SMR" id="A5WDJ2"/>
<dbReference type="STRING" id="349106.PsycPRwf_0781"/>
<dbReference type="KEGG" id="prw:PsycPRwf_0781"/>
<dbReference type="eggNOG" id="COG0078">
    <property type="taxonomic scope" value="Bacteria"/>
</dbReference>
<dbReference type="HOGENOM" id="CLU_043846_3_2_6"/>
<dbReference type="UniPathway" id="UPA00068">
    <property type="reaction ID" value="UER00112"/>
</dbReference>
<dbReference type="GO" id="GO:0005737">
    <property type="term" value="C:cytoplasm"/>
    <property type="evidence" value="ECO:0007669"/>
    <property type="project" value="UniProtKB-SubCell"/>
</dbReference>
<dbReference type="GO" id="GO:0016597">
    <property type="term" value="F:amino acid binding"/>
    <property type="evidence" value="ECO:0007669"/>
    <property type="project" value="InterPro"/>
</dbReference>
<dbReference type="GO" id="GO:0004585">
    <property type="term" value="F:ornithine carbamoyltransferase activity"/>
    <property type="evidence" value="ECO:0007669"/>
    <property type="project" value="UniProtKB-UniRule"/>
</dbReference>
<dbReference type="GO" id="GO:0042450">
    <property type="term" value="P:arginine biosynthetic process via ornithine"/>
    <property type="evidence" value="ECO:0007669"/>
    <property type="project" value="TreeGrafter"/>
</dbReference>
<dbReference type="GO" id="GO:0019240">
    <property type="term" value="P:citrulline biosynthetic process"/>
    <property type="evidence" value="ECO:0007669"/>
    <property type="project" value="TreeGrafter"/>
</dbReference>
<dbReference type="GO" id="GO:0006526">
    <property type="term" value="P:L-arginine biosynthetic process"/>
    <property type="evidence" value="ECO:0007669"/>
    <property type="project" value="UniProtKB-UniPathway"/>
</dbReference>
<dbReference type="FunFam" id="3.40.50.1370:FF:000008">
    <property type="entry name" value="Ornithine carbamoyltransferase"/>
    <property type="match status" value="1"/>
</dbReference>
<dbReference type="Gene3D" id="3.40.50.1370">
    <property type="entry name" value="Aspartate/ornithine carbamoyltransferase"/>
    <property type="match status" value="2"/>
</dbReference>
<dbReference type="HAMAP" id="MF_01109">
    <property type="entry name" value="OTCase"/>
    <property type="match status" value="1"/>
</dbReference>
<dbReference type="InterPro" id="IPR006132">
    <property type="entry name" value="Asp/Orn_carbamoyltranf_P-bd"/>
</dbReference>
<dbReference type="InterPro" id="IPR006130">
    <property type="entry name" value="Asp/Orn_carbamoylTrfase"/>
</dbReference>
<dbReference type="InterPro" id="IPR036901">
    <property type="entry name" value="Asp/Orn_carbamoylTrfase_sf"/>
</dbReference>
<dbReference type="InterPro" id="IPR006131">
    <property type="entry name" value="Asp_carbamoyltransf_Asp/Orn-bd"/>
</dbReference>
<dbReference type="InterPro" id="IPR002292">
    <property type="entry name" value="Orn/put_carbamltrans"/>
</dbReference>
<dbReference type="InterPro" id="IPR024904">
    <property type="entry name" value="OTCase_ArgI"/>
</dbReference>
<dbReference type="NCBIfam" id="TIGR00658">
    <property type="entry name" value="orni_carb_tr"/>
    <property type="match status" value="1"/>
</dbReference>
<dbReference type="NCBIfam" id="NF001986">
    <property type="entry name" value="PRK00779.1"/>
    <property type="match status" value="1"/>
</dbReference>
<dbReference type="PANTHER" id="PTHR45753">
    <property type="entry name" value="ORNITHINE CARBAMOYLTRANSFERASE, MITOCHONDRIAL"/>
    <property type="match status" value="1"/>
</dbReference>
<dbReference type="PANTHER" id="PTHR45753:SF3">
    <property type="entry name" value="ORNITHINE TRANSCARBAMYLASE, MITOCHONDRIAL"/>
    <property type="match status" value="1"/>
</dbReference>
<dbReference type="Pfam" id="PF00185">
    <property type="entry name" value="OTCace"/>
    <property type="match status" value="1"/>
</dbReference>
<dbReference type="Pfam" id="PF02729">
    <property type="entry name" value="OTCace_N"/>
    <property type="match status" value="1"/>
</dbReference>
<dbReference type="PRINTS" id="PR00100">
    <property type="entry name" value="AOTCASE"/>
</dbReference>
<dbReference type="PRINTS" id="PR00102">
    <property type="entry name" value="OTCASE"/>
</dbReference>
<dbReference type="SUPFAM" id="SSF53671">
    <property type="entry name" value="Aspartate/ornithine carbamoyltransferase"/>
    <property type="match status" value="1"/>
</dbReference>
<dbReference type="PROSITE" id="PS00097">
    <property type="entry name" value="CARBAMOYLTRANSFERASE"/>
    <property type="match status" value="1"/>
</dbReference>